<dbReference type="EMBL" id="BA000033">
    <property type="protein sequence ID" value="BAB96058.1"/>
    <property type="molecule type" value="Genomic_DNA"/>
</dbReference>
<dbReference type="RefSeq" id="WP_000503820.1">
    <property type="nucleotide sequence ID" value="NC_003923.1"/>
</dbReference>
<dbReference type="SMR" id="Q8NV99"/>
<dbReference type="KEGG" id="sam:MW2193"/>
<dbReference type="HOGENOM" id="CLU_077358_2_3_9"/>
<dbReference type="UniPathway" id="UPA00344"/>
<dbReference type="GO" id="GO:0005829">
    <property type="term" value="C:cytosol"/>
    <property type="evidence" value="ECO:0007669"/>
    <property type="project" value="TreeGrafter"/>
</dbReference>
<dbReference type="GO" id="GO:0006777">
    <property type="term" value="P:Mo-molybdopterin cofactor biosynthetic process"/>
    <property type="evidence" value="ECO:0007669"/>
    <property type="project" value="UniProtKB-KW"/>
</dbReference>
<dbReference type="CDD" id="cd00886">
    <property type="entry name" value="MogA_MoaB"/>
    <property type="match status" value="1"/>
</dbReference>
<dbReference type="FunFam" id="3.40.980.10:FF:000006">
    <property type="entry name" value="Molybdenum cofactor biosynthesis protein B"/>
    <property type="match status" value="1"/>
</dbReference>
<dbReference type="Gene3D" id="3.40.980.10">
    <property type="entry name" value="MoaB/Mog-like domain"/>
    <property type="match status" value="1"/>
</dbReference>
<dbReference type="InterPro" id="IPR012245">
    <property type="entry name" value="MoaB"/>
</dbReference>
<dbReference type="InterPro" id="IPR036425">
    <property type="entry name" value="MoaB/Mog-like_dom_sf"/>
</dbReference>
<dbReference type="InterPro" id="IPR001453">
    <property type="entry name" value="MoaB/Mog_dom"/>
</dbReference>
<dbReference type="InterPro" id="IPR008284">
    <property type="entry name" value="MoCF_biosynth_CS"/>
</dbReference>
<dbReference type="NCBIfam" id="TIGR00177">
    <property type="entry name" value="molyb_syn"/>
    <property type="match status" value="1"/>
</dbReference>
<dbReference type="PANTHER" id="PTHR43232">
    <property type="entry name" value="MOLYBDENUM COFACTOR BIOSYNTHESIS PROTEIN B"/>
    <property type="match status" value="1"/>
</dbReference>
<dbReference type="PANTHER" id="PTHR43232:SF2">
    <property type="entry name" value="MOLYBDENUM COFACTOR BIOSYNTHESIS PROTEIN B"/>
    <property type="match status" value="1"/>
</dbReference>
<dbReference type="Pfam" id="PF00994">
    <property type="entry name" value="MoCF_biosynth"/>
    <property type="match status" value="1"/>
</dbReference>
<dbReference type="PIRSF" id="PIRSF006443">
    <property type="entry name" value="MoaB"/>
    <property type="match status" value="1"/>
</dbReference>
<dbReference type="SMART" id="SM00852">
    <property type="entry name" value="MoCF_biosynth"/>
    <property type="match status" value="1"/>
</dbReference>
<dbReference type="SUPFAM" id="SSF53218">
    <property type="entry name" value="Molybdenum cofactor biosynthesis proteins"/>
    <property type="match status" value="1"/>
</dbReference>
<dbReference type="PROSITE" id="PS01078">
    <property type="entry name" value="MOCF_BIOSYNTHESIS_1"/>
    <property type="match status" value="1"/>
</dbReference>
<keyword id="KW-0501">Molybdenum cofactor biosynthesis</keyword>
<gene>
    <name type="primary">moaB</name>
    <name type="ordered locus">MW2193</name>
</gene>
<sequence length="168" mass="18500">MGEHQNVKLNRTVKAAVLTVSDTRDFDTDKGGQCVRQLLQADDVEVSDAHYTIVKDEKVAITTQVKKWLEEDIDVIITTGGTGIAQRDVTIEAVKPLLTKEIEGFGELFRYLSYVEDVGTRALLSRAVAGTVNNKLIFSIPGSTGAVKLALEKLIKPELNHLIHELTK</sequence>
<comment type="function">
    <text evidence="1">May be involved in the biosynthesis of molybdopterin.</text>
</comment>
<comment type="pathway">
    <text>Cofactor biosynthesis; molybdopterin biosynthesis.</text>
</comment>
<comment type="similarity">
    <text evidence="2">Belongs to the MoaB/Mog family.</text>
</comment>
<proteinExistence type="inferred from homology"/>
<feature type="chain" id="PRO_0000170977" description="Molybdenum cofactor biosynthesis protein B">
    <location>
        <begin position="1"/>
        <end position="168"/>
    </location>
</feature>
<name>MOAB_STAAW</name>
<evidence type="ECO:0000250" key="1"/>
<evidence type="ECO:0000305" key="2"/>
<accession>Q8NV99</accession>
<organism>
    <name type="scientific">Staphylococcus aureus (strain MW2)</name>
    <dbReference type="NCBI Taxonomy" id="196620"/>
    <lineage>
        <taxon>Bacteria</taxon>
        <taxon>Bacillati</taxon>
        <taxon>Bacillota</taxon>
        <taxon>Bacilli</taxon>
        <taxon>Bacillales</taxon>
        <taxon>Staphylococcaceae</taxon>
        <taxon>Staphylococcus</taxon>
    </lineage>
</organism>
<protein>
    <recommendedName>
        <fullName>Molybdenum cofactor biosynthesis protein B</fullName>
    </recommendedName>
</protein>
<reference key="1">
    <citation type="journal article" date="2002" name="Lancet">
        <title>Genome and virulence determinants of high virulence community-acquired MRSA.</title>
        <authorList>
            <person name="Baba T."/>
            <person name="Takeuchi F."/>
            <person name="Kuroda M."/>
            <person name="Yuzawa H."/>
            <person name="Aoki K."/>
            <person name="Oguchi A."/>
            <person name="Nagai Y."/>
            <person name="Iwama N."/>
            <person name="Asano K."/>
            <person name="Naimi T."/>
            <person name="Kuroda H."/>
            <person name="Cui L."/>
            <person name="Yamamoto K."/>
            <person name="Hiramatsu K."/>
        </authorList>
    </citation>
    <scope>NUCLEOTIDE SEQUENCE [LARGE SCALE GENOMIC DNA]</scope>
    <source>
        <strain>MW2</strain>
    </source>
</reference>